<proteinExistence type="inferred from homology"/>
<reference key="1">
    <citation type="journal article" date="2005" name="J. Bacteriol.">
        <title>Insights on evolution of virulence and resistance from the complete genome analysis of an early methicillin-resistant Staphylococcus aureus strain and a biofilm-producing methicillin-resistant Staphylococcus epidermidis strain.</title>
        <authorList>
            <person name="Gill S.R."/>
            <person name="Fouts D.E."/>
            <person name="Archer G.L."/>
            <person name="Mongodin E.F."/>
            <person name="DeBoy R.T."/>
            <person name="Ravel J."/>
            <person name="Paulsen I.T."/>
            <person name="Kolonay J.F."/>
            <person name="Brinkac L.M."/>
            <person name="Beanan M.J."/>
            <person name="Dodson R.J."/>
            <person name="Daugherty S.C."/>
            <person name="Madupu R."/>
            <person name="Angiuoli S.V."/>
            <person name="Durkin A.S."/>
            <person name="Haft D.H."/>
            <person name="Vamathevan J.J."/>
            <person name="Khouri H."/>
            <person name="Utterback T.R."/>
            <person name="Lee C."/>
            <person name="Dimitrov G."/>
            <person name="Jiang L."/>
            <person name="Qin H."/>
            <person name="Weidman J."/>
            <person name="Tran K."/>
            <person name="Kang K.H."/>
            <person name="Hance I.R."/>
            <person name="Nelson K.E."/>
            <person name="Fraser C.M."/>
        </authorList>
    </citation>
    <scope>NUCLEOTIDE SEQUENCE [LARGE SCALE GENOMIC DNA]</scope>
    <source>
        <strain>ATCC 35984 / DSM 28319 / BCRC 17069 / CCUG 31568 / BM 3577 / RP62A</strain>
    </source>
</reference>
<name>AROD_STAEQ</name>
<keyword id="KW-0028">Amino-acid biosynthesis</keyword>
<keyword id="KW-0057">Aromatic amino acid biosynthesis</keyword>
<keyword id="KW-0456">Lyase</keyword>
<keyword id="KW-1185">Reference proteome</keyword>
<keyword id="KW-0704">Schiff base</keyword>
<comment type="function">
    <text evidence="1">Involved in the third step of the chorismate pathway, which leads to the biosynthesis of aromatic amino acids. Catalyzes the cis-dehydration of 3-dehydroquinate (DHQ) and introduces the first double bond of the aromatic ring to yield 3-dehydroshikimate.</text>
</comment>
<comment type="catalytic activity">
    <reaction evidence="1">
        <text>3-dehydroquinate = 3-dehydroshikimate + H2O</text>
        <dbReference type="Rhea" id="RHEA:21096"/>
        <dbReference type="ChEBI" id="CHEBI:15377"/>
        <dbReference type="ChEBI" id="CHEBI:16630"/>
        <dbReference type="ChEBI" id="CHEBI:32364"/>
        <dbReference type="EC" id="4.2.1.10"/>
    </reaction>
</comment>
<comment type="pathway">
    <text evidence="1">Metabolic intermediate biosynthesis; chorismate biosynthesis; chorismate from D-erythrose 4-phosphate and phosphoenolpyruvate: step 3/7.</text>
</comment>
<comment type="subunit">
    <text evidence="1">Homodimer.</text>
</comment>
<comment type="similarity">
    <text evidence="1">Belongs to the type-I 3-dehydroquinase family.</text>
</comment>
<feature type="chain" id="PRO_0000138815" description="3-dehydroquinate dehydratase">
    <location>
        <begin position="1"/>
        <end position="238"/>
    </location>
</feature>
<feature type="active site" description="Proton donor/acceptor" evidence="1">
    <location>
        <position position="131"/>
    </location>
</feature>
<feature type="active site" description="Schiff-base intermediate with substrate" evidence="1">
    <location>
        <position position="158"/>
    </location>
</feature>
<feature type="binding site" evidence="1">
    <location>
        <begin position="35"/>
        <end position="37"/>
    </location>
    <ligand>
        <name>3-dehydroquinate</name>
        <dbReference type="ChEBI" id="CHEBI:32364"/>
    </ligand>
</feature>
<feature type="binding site" evidence="1">
    <location>
        <position position="68"/>
    </location>
    <ligand>
        <name>3-dehydroquinate</name>
        <dbReference type="ChEBI" id="CHEBI:32364"/>
    </ligand>
</feature>
<feature type="binding site" evidence="1">
    <location>
        <position position="200"/>
    </location>
    <ligand>
        <name>3-dehydroquinate</name>
        <dbReference type="ChEBI" id="CHEBI:32364"/>
    </ligand>
</feature>
<feature type="binding site" evidence="1">
    <location>
        <position position="223"/>
    </location>
    <ligand>
        <name>3-dehydroquinate</name>
        <dbReference type="ChEBI" id="CHEBI:32364"/>
    </ligand>
</feature>
<protein>
    <recommendedName>
        <fullName evidence="1">3-dehydroquinate dehydratase</fullName>
        <shortName evidence="1">3-dehydroquinase</shortName>
        <ecNumber evidence="1">4.2.1.10</ecNumber>
    </recommendedName>
    <alternativeName>
        <fullName evidence="1">Type I DHQase</fullName>
    </alternativeName>
    <alternativeName>
        <fullName evidence="1">Type I dehydroquinase</fullName>
        <shortName evidence="1">DHQ1</shortName>
    </alternativeName>
</protein>
<evidence type="ECO:0000255" key="1">
    <source>
        <dbReference type="HAMAP-Rule" id="MF_00214"/>
    </source>
</evidence>
<gene>
    <name evidence="1" type="primary">aroD</name>
    <name type="ordered locus">SERP0481</name>
</gene>
<organism>
    <name type="scientific">Staphylococcus epidermidis (strain ATCC 35984 / DSM 28319 / BCRC 17069 / CCUG 31568 / BM 3577 / RP62A)</name>
    <dbReference type="NCBI Taxonomy" id="176279"/>
    <lineage>
        <taxon>Bacteria</taxon>
        <taxon>Bacillati</taxon>
        <taxon>Bacillota</taxon>
        <taxon>Bacilli</taxon>
        <taxon>Bacillales</taxon>
        <taxon>Staphylococcaceae</taxon>
        <taxon>Staphylococcus</taxon>
    </lineage>
</organism>
<dbReference type="EC" id="4.2.1.10" evidence="1"/>
<dbReference type="EMBL" id="CP000029">
    <property type="protein sequence ID" value="AAW53832.1"/>
    <property type="molecule type" value="Genomic_DNA"/>
</dbReference>
<dbReference type="RefSeq" id="WP_001831974.1">
    <property type="nucleotide sequence ID" value="NC_002976.3"/>
</dbReference>
<dbReference type="SMR" id="Q5HQR7"/>
<dbReference type="STRING" id="176279.SERP0481"/>
<dbReference type="GeneID" id="50019258"/>
<dbReference type="KEGG" id="ser:SERP0481"/>
<dbReference type="eggNOG" id="COG0710">
    <property type="taxonomic scope" value="Bacteria"/>
</dbReference>
<dbReference type="HOGENOM" id="CLU_064444_2_1_9"/>
<dbReference type="UniPathway" id="UPA00053">
    <property type="reaction ID" value="UER00086"/>
</dbReference>
<dbReference type="Proteomes" id="UP000000531">
    <property type="component" value="Chromosome"/>
</dbReference>
<dbReference type="GO" id="GO:0003855">
    <property type="term" value="F:3-dehydroquinate dehydratase activity"/>
    <property type="evidence" value="ECO:0007669"/>
    <property type="project" value="UniProtKB-UniRule"/>
</dbReference>
<dbReference type="GO" id="GO:0046279">
    <property type="term" value="P:3,4-dihydroxybenzoate biosynthetic process"/>
    <property type="evidence" value="ECO:0007669"/>
    <property type="project" value="UniProtKB-ARBA"/>
</dbReference>
<dbReference type="GO" id="GO:0008652">
    <property type="term" value="P:amino acid biosynthetic process"/>
    <property type="evidence" value="ECO:0007669"/>
    <property type="project" value="UniProtKB-KW"/>
</dbReference>
<dbReference type="GO" id="GO:0009073">
    <property type="term" value="P:aromatic amino acid family biosynthetic process"/>
    <property type="evidence" value="ECO:0007669"/>
    <property type="project" value="UniProtKB-KW"/>
</dbReference>
<dbReference type="GO" id="GO:0009423">
    <property type="term" value="P:chorismate biosynthetic process"/>
    <property type="evidence" value="ECO:0007669"/>
    <property type="project" value="UniProtKB-UniRule"/>
</dbReference>
<dbReference type="CDD" id="cd00502">
    <property type="entry name" value="DHQase_I"/>
    <property type="match status" value="1"/>
</dbReference>
<dbReference type="FunFam" id="3.20.20.70:FF:000047">
    <property type="entry name" value="3-dehydroquinate dehydratase"/>
    <property type="match status" value="1"/>
</dbReference>
<dbReference type="Gene3D" id="3.20.20.70">
    <property type="entry name" value="Aldolase class I"/>
    <property type="match status" value="1"/>
</dbReference>
<dbReference type="HAMAP" id="MF_00214">
    <property type="entry name" value="AroD"/>
    <property type="match status" value="1"/>
</dbReference>
<dbReference type="InterPro" id="IPR013785">
    <property type="entry name" value="Aldolase_TIM"/>
</dbReference>
<dbReference type="InterPro" id="IPR001381">
    <property type="entry name" value="DHquinase_I"/>
</dbReference>
<dbReference type="InterPro" id="IPR050146">
    <property type="entry name" value="Type-I_3-dehydroquinase"/>
</dbReference>
<dbReference type="NCBIfam" id="TIGR01093">
    <property type="entry name" value="aroD"/>
    <property type="match status" value="1"/>
</dbReference>
<dbReference type="PANTHER" id="PTHR43699">
    <property type="entry name" value="3-DEHYDROQUINATE DEHYDRATASE"/>
    <property type="match status" value="1"/>
</dbReference>
<dbReference type="PANTHER" id="PTHR43699:SF1">
    <property type="entry name" value="3-DEHYDROQUINATE DEHYDRATASE"/>
    <property type="match status" value="1"/>
</dbReference>
<dbReference type="Pfam" id="PF01487">
    <property type="entry name" value="DHquinase_I"/>
    <property type="match status" value="1"/>
</dbReference>
<dbReference type="SUPFAM" id="SSF51569">
    <property type="entry name" value="Aldolase"/>
    <property type="match status" value="1"/>
</dbReference>
<sequence length="238" mass="26944">MTHVDIAATIAPEDKLSKTLLKDIKVNEESIDIIELRIDQWPSFNKALLNEVIKQLKIFHLKILVTYRTSVQGGKGAVNEQEYLNILGELIECPQFDMIDIEWSSAVKIEKYTHLVQRAQQKGLEVVLSHHNFQETPALDELKFIYFKMQKLNPEYLKLAVMPKCQEDVLHLLEAMSLTAKHTTCRIVGISMSSLGKVSRIAQGVFGGTLSYGCIEEPQAPGQIHVSKLKSMVSFYED</sequence>
<accession>Q5HQR7</accession>